<proteinExistence type="evidence at protein level"/>
<organism>
    <name type="scientific">Homo sapiens</name>
    <name type="common">Human</name>
    <dbReference type="NCBI Taxonomy" id="9606"/>
    <lineage>
        <taxon>Eukaryota</taxon>
        <taxon>Metazoa</taxon>
        <taxon>Chordata</taxon>
        <taxon>Craniata</taxon>
        <taxon>Vertebrata</taxon>
        <taxon>Euteleostomi</taxon>
        <taxon>Mammalia</taxon>
        <taxon>Eutheria</taxon>
        <taxon>Euarchontoglires</taxon>
        <taxon>Primates</taxon>
        <taxon>Haplorrhini</taxon>
        <taxon>Catarrhini</taxon>
        <taxon>Hominidae</taxon>
        <taxon>Homo</taxon>
    </lineage>
</organism>
<reference key="1">
    <citation type="journal article" date="1992" name="Biochem. J.">
        <title>A cDNA clone for human glucosamine-6-sulphatase reveals differences between arylsulphatases and non-arylsulphatases.</title>
        <authorList>
            <person name="Robertson D.A."/>
            <person name="Freeman C."/>
            <person name="Morris C.P."/>
            <person name="Hopwood J.J."/>
        </authorList>
    </citation>
    <scope>NUCLEOTIDE SEQUENCE [MRNA] (ISOFORM 1)</scope>
    <scope>PARTIAL PROTEIN SEQUENCE</scope>
    <scope>FUNCTION</scope>
    <scope>CATALYTIC ACTIVITY</scope>
    <scope>BIOPHYSICOCHEMICAL PROPERTIES</scope>
    <scope>GLYCOSYLATION AT ASN-422</scope>
    <source>
        <tissue>Endothelial cell</tissue>
    </source>
</reference>
<reference key="2">
    <citation type="journal article" date="2004" name="Nat. Genet.">
        <title>Complete sequencing and characterization of 21,243 full-length human cDNAs.</title>
        <authorList>
            <person name="Ota T."/>
            <person name="Suzuki Y."/>
            <person name="Nishikawa T."/>
            <person name="Otsuki T."/>
            <person name="Sugiyama T."/>
            <person name="Irie R."/>
            <person name="Wakamatsu A."/>
            <person name="Hayashi K."/>
            <person name="Sato H."/>
            <person name="Nagai K."/>
            <person name="Kimura K."/>
            <person name="Makita H."/>
            <person name="Sekine M."/>
            <person name="Obayashi M."/>
            <person name="Nishi T."/>
            <person name="Shibahara T."/>
            <person name="Tanaka T."/>
            <person name="Ishii S."/>
            <person name="Yamamoto J."/>
            <person name="Saito K."/>
            <person name="Kawai Y."/>
            <person name="Isono Y."/>
            <person name="Nakamura Y."/>
            <person name="Nagahari K."/>
            <person name="Murakami K."/>
            <person name="Yasuda T."/>
            <person name="Iwayanagi T."/>
            <person name="Wagatsuma M."/>
            <person name="Shiratori A."/>
            <person name="Sudo H."/>
            <person name="Hosoiri T."/>
            <person name="Kaku Y."/>
            <person name="Kodaira H."/>
            <person name="Kondo H."/>
            <person name="Sugawara M."/>
            <person name="Takahashi M."/>
            <person name="Kanda K."/>
            <person name="Yokoi T."/>
            <person name="Furuya T."/>
            <person name="Kikkawa E."/>
            <person name="Omura Y."/>
            <person name="Abe K."/>
            <person name="Kamihara K."/>
            <person name="Katsuta N."/>
            <person name="Sato K."/>
            <person name="Tanikawa M."/>
            <person name="Yamazaki M."/>
            <person name="Ninomiya K."/>
            <person name="Ishibashi T."/>
            <person name="Yamashita H."/>
            <person name="Murakawa K."/>
            <person name="Fujimori K."/>
            <person name="Tanai H."/>
            <person name="Kimata M."/>
            <person name="Watanabe M."/>
            <person name="Hiraoka S."/>
            <person name="Chiba Y."/>
            <person name="Ishida S."/>
            <person name="Ono Y."/>
            <person name="Takiguchi S."/>
            <person name="Watanabe S."/>
            <person name="Yosida M."/>
            <person name="Hotuta T."/>
            <person name="Kusano J."/>
            <person name="Kanehori K."/>
            <person name="Takahashi-Fujii A."/>
            <person name="Hara H."/>
            <person name="Tanase T.-O."/>
            <person name="Nomura Y."/>
            <person name="Togiya S."/>
            <person name="Komai F."/>
            <person name="Hara R."/>
            <person name="Takeuchi K."/>
            <person name="Arita M."/>
            <person name="Imose N."/>
            <person name="Musashino K."/>
            <person name="Yuuki H."/>
            <person name="Oshima A."/>
            <person name="Sasaki N."/>
            <person name="Aotsuka S."/>
            <person name="Yoshikawa Y."/>
            <person name="Matsunawa H."/>
            <person name="Ichihara T."/>
            <person name="Shiohata N."/>
            <person name="Sano S."/>
            <person name="Moriya S."/>
            <person name="Momiyama H."/>
            <person name="Satoh N."/>
            <person name="Takami S."/>
            <person name="Terashima Y."/>
            <person name="Suzuki O."/>
            <person name="Nakagawa S."/>
            <person name="Senoh A."/>
            <person name="Mizoguchi H."/>
            <person name="Goto Y."/>
            <person name="Shimizu F."/>
            <person name="Wakebe H."/>
            <person name="Hishigaki H."/>
            <person name="Watanabe T."/>
            <person name="Sugiyama A."/>
            <person name="Takemoto M."/>
            <person name="Kawakami B."/>
            <person name="Yamazaki M."/>
            <person name="Watanabe K."/>
            <person name="Kumagai A."/>
            <person name="Itakura S."/>
            <person name="Fukuzumi Y."/>
            <person name="Fujimori Y."/>
            <person name="Komiyama M."/>
            <person name="Tashiro H."/>
            <person name="Tanigami A."/>
            <person name="Fujiwara T."/>
            <person name="Ono T."/>
            <person name="Yamada K."/>
            <person name="Fujii Y."/>
            <person name="Ozaki K."/>
            <person name="Hirao M."/>
            <person name="Ohmori Y."/>
            <person name="Kawabata A."/>
            <person name="Hikiji T."/>
            <person name="Kobatake N."/>
            <person name="Inagaki H."/>
            <person name="Ikema Y."/>
            <person name="Okamoto S."/>
            <person name="Okitani R."/>
            <person name="Kawakami T."/>
            <person name="Noguchi S."/>
            <person name="Itoh T."/>
            <person name="Shigeta K."/>
            <person name="Senba T."/>
            <person name="Matsumura K."/>
            <person name="Nakajima Y."/>
            <person name="Mizuno T."/>
            <person name="Morinaga M."/>
            <person name="Sasaki M."/>
            <person name="Togashi T."/>
            <person name="Oyama M."/>
            <person name="Hata H."/>
            <person name="Watanabe M."/>
            <person name="Komatsu T."/>
            <person name="Mizushima-Sugano J."/>
            <person name="Satoh T."/>
            <person name="Shirai Y."/>
            <person name="Takahashi Y."/>
            <person name="Nakagawa K."/>
            <person name="Okumura K."/>
            <person name="Nagase T."/>
            <person name="Nomura N."/>
            <person name="Kikuchi H."/>
            <person name="Masuho Y."/>
            <person name="Yamashita R."/>
            <person name="Nakai K."/>
            <person name="Yada T."/>
            <person name="Nakamura Y."/>
            <person name="Ohara O."/>
            <person name="Isogai T."/>
            <person name="Sugano S."/>
        </authorList>
    </citation>
    <scope>NUCLEOTIDE SEQUENCE [LARGE SCALE MRNA] (ISOFORM 2)</scope>
    <source>
        <tissue>Testis</tissue>
    </source>
</reference>
<reference key="3">
    <citation type="submission" date="2005-04" db="EMBL/GenBank/DDBJ databases">
        <authorList>
            <person name="Totoki Y."/>
            <person name="Toyoda A."/>
            <person name="Takeda T."/>
            <person name="Sakaki Y."/>
            <person name="Tanaka A."/>
            <person name="Yokoyama S."/>
        </authorList>
    </citation>
    <scope>NUCLEOTIDE SEQUENCE [LARGE SCALE MRNA] (ISOFORM 1)</scope>
</reference>
<reference key="4">
    <citation type="journal article" date="2006" name="Nature">
        <title>The finished DNA sequence of human chromosome 12.</title>
        <authorList>
            <person name="Scherer S.E."/>
            <person name="Muzny D.M."/>
            <person name="Buhay C.J."/>
            <person name="Chen R."/>
            <person name="Cree A."/>
            <person name="Ding Y."/>
            <person name="Dugan-Rocha S."/>
            <person name="Gill R."/>
            <person name="Gunaratne P."/>
            <person name="Harris R.A."/>
            <person name="Hawes A.C."/>
            <person name="Hernandez J."/>
            <person name="Hodgson A.V."/>
            <person name="Hume J."/>
            <person name="Jackson A."/>
            <person name="Khan Z.M."/>
            <person name="Kovar-Smith C."/>
            <person name="Lewis L.R."/>
            <person name="Lozado R.J."/>
            <person name="Metzker M.L."/>
            <person name="Milosavljevic A."/>
            <person name="Miner G.R."/>
            <person name="Montgomery K.T."/>
            <person name="Morgan M.B."/>
            <person name="Nazareth L.V."/>
            <person name="Scott G."/>
            <person name="Sodergren E."/>
            <person name="Song X.-Z."/>
            <person name="Steffen D."/>
            <person name="Lovering R.C."/>
            <person name="Wheeler D.A."/>
            <person name="Worley K.C."/>
            <person name="Yuan Y."/>
            <person name="Zhang Z."/>
            <person name="Adams C.Q."/>
            <person name="Ansari-Lari M.A."/>
            <person name="Ayele M."/>
            <person name="Brown M.J."/>
            <person name="Chen G."/>
            <person name="Chen Z."/>
            <person name="Clerc-Blankenburg K.P."/>
            <person name="Davis C."/>
            <person name="Delgado O."/>
            <person name="Dinh H.H."/>
            <person name="Draper H."/>
            <person name="Gonzalez-Garay M.L."/>
            <person name="Havlak P."/>
            <person name="Jackson L.R."/>
            <person name="Jacob L.S."/>
            <person name="Kelly S.H."/>
            <person name="Li L."/>
            <person name="Li Z."/>
            <person name="Liu J."/>
            <person name="Liu W."/>
            <person name="Lu J."/>
            <person name="Maheshwari M."/>
            <person name="Nguyen B.-V."/>
            <person name="Okwuonu G.O."/>
            <person name="Pasternak S."/>
            <person name="Perez L.M."/>
            <person name="Plopper F.J.H."/>
            <person name="Santibanez J."/>
            <person name="Shen H."/>
            <person name="Tabor P.E."/>
            <person name="Verduzco D."/>
            <person name="Waldron L."/>
            <person name="Wang Q."/>
            <person name="Williams G.A."/>
            <person name="Zhang J."/>
            <person name="Zhou J."/>
            <person name="Allen C.C."/>
            <person name="Amin A.G."/>
            <person name="Anyalebechi V."/>
            <person name="Bailey M."/>
            <person name="Barbaria J.A."/>
            <person name="Bimage K.E."/>
            <person name="Bryant N.P."/>
            <person name="Burch P.E."/>
            <person name="Burkett C.E."/>
            <person name="Burrell K.L."/>
            <person name="Calderon E."/>
            <person name="Cardenas V."/>
            <person name="Carter K."/>
            <person name="Casias K."/>
            <person name="Cavazos I."/>
            <person name="Cavazos S.R."/>
            <person name="Ceasar H."/>
            <person name="Chacko J."/>
            <person name="Chan S.N."/>
            <person name="Chavez D."/>
            <person name="Christopoulos C."/>
            <person name="Chu J."/>
            <person name="Cockrell R."/>
            <person name="Cox C.D."/>
            <person name="Dang M."/>
            <person name="Dathorne S.R."/>
            <person name="David R."/>
            <person name="Davis C.M."/>
            <person name="Davy-Carroll L."/>
            <person name="Deshazo D.R."/>
            <person name="Donlin J.E."/>
            <person name="D'Souza L."/>
            <person name="Eaves K.A."/>
            <person name="Egan A."/>
            <person name="Emery-Cohen A.J."/>
            <person name="Escotto M."/>
            <person name="Flagg N."/>
            <person name="Forbes L.D."/>
            <person name="Gabisi A.M."/>
            <person name="Garza M."/>
            <person name="Hamilton C."/>
            <person name="Henderson N."/>
            <person name="Hernandez O."/>
            <person name="Hines S."/>
            <person name="Hogues M.E."/>
            <person name="Huang M."/>
            <person name="Idlebird D.G."/>
            <person name="Johnson R."/>
            <person name="Jolivet A."/>
            <person name="Jones S."/>
            <person name="Kagan R."/>
            <person name="King L.M."/>
            <person name="Leal B."/>
            <person name="Lebow H."/>
            <person name="Lee S."/>
            <person name="LeVan J.M."/>
            <person name="Lewis L.C."/>
            <person name="London P."/>
            <person name="Lorensuhewa L.M."/>
            <person name="Loulseged H."/>
            <person name="Lovett D.A."/>
            <person name="Lucier A."/>
            <person name="Lucier R.L."/>
            <person name="Ma J."/>
            <person name="Madu R.C."/>
            <person name="Mapua P."/>
            <person name="Martindale A.D."/>
            <person name="Martinez E."/>
            <person name="Massey E."/>
            <person name="Mawhiney S."/>
            <person name="Meador M.G."/>
            <person name="Mendez S."/>
            <person name="Mercado C."/>
            <person name="Mercado I.C."/>
            <person name="Merritt C.E."/>
            <person name="Miner Z.L."/>
            <person name="Minja E."/>
            <person name="Mitchell T."/>
            <person name="Mohabbat F."/>
            <person name="Mohabbat K."/>
            <person name="Montgomery B."/>
            <person name="Moore N."/>
            <person name="Morris S."/>
            <person name="Munidasa M."/>
            <person name="Ngo R.N."/>
            <person name="Nguyen N.B."/>
            <person name="Nickerson E."/>
            <person name="Nwaokelemeh O.O."/>
            <person name="Nwokenkwo S."/>
            <person name="Obregon M."/>
            <person name="Oguh M."/>
            <person name="Oragunye N."/>
            <person name="Oviedo R.J."/>
            <person name="Parish B.J."/>
            <person name="Parker D.N."/>
            <person name="Parrish J."/>
            <person name="Parks K.L."/>
            <person name="Paul H.A."/>
            <person name="Payton B.A."/>
            <person name="Perez A."/>
            <person name="Perrin W."/>
            <person name="Pickens A."/>
            <person name="Primus E.L."/>
            <person name="Pu L.-L."/>
            <person name="Puazo M."/>
            <person name="Quiles M.M."/>
            <person name="Quiroz J.B."/>
            <person name="Rabata D."/>
            <person name="Reeves K."/>
            <person name="Ruiz S.J."/>
            <person name="Shao H."/>
            <person name="Sisson I."/>
            <person name="Sonaike T."/>
            <person name="Sorelle R.P."/>
            <person name="Sutton A.E."/>
            <person name="Svatek A.F."/>
            <person name="Svetz L.A."/>
            <person name="Tamerisa K.S."/>
            <person name="Taylor T.R."/>
            <person name="Teague B."/>
            <person name="Thomas N."/>
            <person name="Thorn R.D."/>
            <person name="Trejos Z.Y."/>
            <person name="Trevino B.K."/>
            <person name="Ukegbu O.N."/>
            <person name="Urban J.B."/>
            <person name="Vasquez L.I."/>
            <person name="Vera V.A."/>
            <person name="Villasana D.M."/>
            <person name="Wang L."/>
            <person name="Ward-Moore S."/>
            <person name="Warren J.T."/>
            <person name="Wei X."/>
            <person name="White F."/>
            <person name="Williamson A.L."/>
            <person name="Wleczyk R."/>
            <person name="Wooden H.S."/>
            <person name="Wooden S.H."/>
            <person name="Yen J."/>
            <person name="Yoon L."/>
            <person name="Yoon V."/>
            <person name="Zorrilla S.E."/>
            <person name="Nelson D."/>
            <person name="Kucherlapati R."/>
            <person name="Weinstock G."/>
            <person name="Gibbs R.A."/>
        </authorList>
    </citation>
    <scope>NUCLEOTIDE SEQUENCE [LARGE SCALE GENOMIC DNA]</scope>
</reference>
<reference key="5">
    <citation type="journal article" date="2004" name="Genome Res.">
        <title>The status, quality, and expansion of the NIH full-length cDNA project: the Mammalian Gene Collection (MGC).</title>
        <authorList>
            <consortium name="The MGC Project Team"/>
        </authorList>
    </citation>
    <scope>NUCLEOTIDE SEQUENCE [LARGE SCALE MRNA] (ISOFORM 1)</scope>
    <source>
        <tissue>Urinary bladder</tissue>
    </source>
</reference>
<reference key="6">
    <citation type="journal article" date="1988" name="Biochem. Biophys. Res. Commun.">
        <title>Human glucosamine-6-sulfatase cDNA reveals homology with steroid sulfatase.</title>
        <authorList>
            <person name="Robertson D.A."/>
            <person name="Freeman C."/>
            <person name="Nelson P.V."/>
            <person name="Morris C.P."/>
            <person name="Hopwood J.J."/>
        </authorList>
    </citation>
    <scope>NUCLEOTIDE SEQUENCE [MRNA] OF 178-552 (ISOFORM 1)</scope>
    <scope>PARTIAL PROTEIN SEQUENCE</scope>
</reference>
<reference key="7">
    <citation type="journal article" date="2003" name="Nat. Biotechnol.">
        <title>Identification and quantification of N-linked glycoproteins using hydrazide chemistry, stable isotope labeling and mass spectrometry.</title>
        <authorList>
            <person name="Zhang H."/>
            <person name="Li X.-J."/>
            <person name="Martin D.B."/>
            <person name="Aebersold R."/>
        </authorList>
    </citation>
    <scope>GLYCOSYLATION AT ASN-183 AND ASN-279</scope>
</reference>
<reference key="8">
    <citation type="journal article" date="2009" name="J. Proteome Res.">
        <title>Glycoproteomics analysis of human liver tissue by combination of multiple enzyme digestion and hydrazide chemistry.</title>
        <authorList>
            <person name="Chen R."/>
            <person name="Jiang X."/>
            <person name="Sun D."/>
            <person name="Han G."/>
            <person name="Wang F."/>
            <person name="Ye M."/>
            <person name="Wang L."/>
            <person name="Zou H."/>
        </authorList>
    </citation>
    <scope>GLYCOSYLATION [LARGE SCALE ANALYSIS] AT ASN-183; ASN-317; ASN-387 AND ASN-422</scope>
    <source>
        <tissue>Liver</tissue>
    </source>
</reference>
<reference key="9">
    <citation type="journal article" date="2003" name="Genomics">
        <title>Genomic basis of mucopolysaccharidosis type IIID (MIM 252940) revealed by sequencing of GNS encoding N-acetylglucosamine-6-sulfatase.</title>
        <authorList>
            <person name="Mok A."/>
            <person name="Cao H."/>
            <person name="Hegele R.A."/>
        </authorList>
    </citation>
    <scope>INVOLVEMENT IN MPS3D</scope>
</reference>
<reference key="10">
    <citation type="journal article" date="2011" name="BMC Syst. Biol.">
        <title>Initial characterization of the human central proteome.</title>
        <authorList>
            <person name="Burkard T.R."/>
            <person name="Planyavsky M."/>
            <person name="Kaupe I."/>
            <person name="Breitwieser F.P."/>
            <person name="Buerckstuemmer T."/>
            <person name="Bennett K.L."/>
            <person name="Superti-Furga G."/>
            <person name="Colinge J."/>
        </authorList>
    </citation>
    <scope>IDENTIFICATION BY MASS SPECTROMETRY [LARGE SCALE ANALYSIS]</scope>
</reference>
<reference key="11">
    <citation type="journal article" date="2013" name="J. Proteome Res.">
        <title>Toward a comprehensive characterization of a human cancer cell phosphoproteome.</title>
        <authorList>
            <person name="Zhou H."/>
            <person name="Di Palma S."/>
            <person name="Preisinger C."/>
            <person name="Peng M."/>
            <person name="Polat A.N."/>
            <person name="Heck A.J."/>
            <person name="Mohammed S."/>
        </authorList>
    </citation>
    <scope>PHOSPHORYLATION [LARGE SCALE ANALYSIS] AT SER-541</scope>
    <scope>IDENTIFICATION BY MASS SPECTROMETRY [LARGE SCALE ANALYSIS]</scope>
    <source>
        <tissue>Cervix carcinoma</tissue>
        <tissue>Erythroleukemia</tissue>
    </source>
</reference>
<reference key="12">
    <citation type="journal article" date="2014" name="J. Proteomics">
        <title>An enzyme assisted RP-RPLC approach for in-depth analysis of human liver phosphoproteome.</title>
        <authorList>
            <person name="Bian Y."/>
            <person name="Song C."/>
            <person name="Cheng K."/>
            <person name="Dong M."/>
            <person name="Wang F."/>
            <person name="Huang J."/>
            <person name="Sun D."/>
            <person name="Wang L."/>
            <person name="Ye M."/>
            <person name="Zou H."/>
        </authorList>
    </citation>
    <scope>IDENTIFICATION BY MASS SPECTROMETRY [LARGE SCALE ANALYSIS]</scope>
    <source>
        <tissue>Liver</tissue>
    </source>
</reference>
<reference key="13">
    <citation type="journal article" date="2015" name="Proteomics">
        <title>N-terminome analysis of the human mitochondrial proteome.</title>
        <authorList>
            <person name="Vaca Jacome A.S."/>
            <person name="Rabilloud T."/>
            <person name="Schaeffer-Reiss C."/>
            <person name="Rompais M."/>
            <person name="Ayoub D."/>
            <person name="Lane L."/>
            <person name="Bairoch A."/>
            <person name="Van Dorsselaer A."/>
            <person name="Carapito C."/>
        </authorList>
    </citation>
    <scope>IDENTIFICATION BY MASS SPECTROMETRY [LARGE SCALE ANALYSIS]</scope>
</reference>
<reference key="14">
    <citation type="journal article" date="2010" name="Hum. Mutat.">
        <title>Mucopolysaccharidosis type IIID: 12 new patients and 15 novel mutations.</title>
        <authorList>
            <person name="Valstar M.J."/>
            <person name="Bertoli-Avella A.M."/>
            <person name="Wessels M.W."/>
            <person name="Ruijter G.J.G."/>
            <person name="de Graaf B."/>
            <person name="Olmer R."/>
            <person name="Elfferich P."/>
            <person name="Neijs S."/>
            <person name="Kariminejad R."/>
            <person name="Suheyl Ezgue F."/>
            <person name="Tokatli A."/>
            <person name="Czartoryska B."/>
            <person name="Bosschaart A.N."/>
            <person name="van den Bos-Terpstra F."/>
            <person name="Puissant H."/>
            <person name="Buerger F."/>
            <person name="Omran H."/>
            <person name="Eckert D."/>
            <person name="Filocamo M."/>
            <person name="Simeonov E."/>
            <person name="Willems P.J."/>
            <person name="Wevers R.A."/>
            <person name="Niermeijer M.F."/>
            <person name="Halley D.J.J."/>
            <person name="Poorthuis B.J.H.M."/>
            <person name="van Diggelen O.P."/>
        </authorList>
    </citation>
    <scope>VARIANTS MPS3D ILE-94; 304-GLU--LEU-306 DEL; ARG-340 AND GLU-418</scope>
</reference>
<evidence type="ECO:0000250" key="1"/>
<evidence type="ECO:0000250" key="2">
    <source>
        <dbReference type="UniProtKB" id="P15289"/>
    </source>
</evidence>
<evidence type="ECO:0000255" key="3"/>
<evidence type="ECO:0000269" key="4">
    <source>
    </source>
</evidence>
<evidence type="ECO:0000269" key="5">
    <source>
    </source>
</evidence>
<evidence type="ECO:0000269" key="6">
    <source>
    </source>
</evidence>
<evidence type="ECO:0000269" key="7">
    <source>
    </source>
</evidence>
<evidence type="ECO:0000269" key="8">
    <source>
    </source>
</evidence>
<evidence type="ECO:0000303" key="9">
    <source>
    </source>
</evidence>
<evidence type="ECO:0000303" key="10">
    <source>
    </source>
</evidence>
<evidence type="ECO:0000305" key="11"/>
<evidence type="ECO:0007744" key="12">
    <source>
    </source>
</evidence>
<name>GNS_HUMAN</name>
<accession>P15586</accession>
<accession>B4DYH8</accession>
<accession>Q53F05</accession>
<keyword id="KW-0025">Alternative splicing</keyword>
<keyword id="KW-0106">Calcium</keyword>
<keyword id="KW-0903">Direct protein sequencing</keyword>
<keyword id="KW-0225">Disease variant</keyword>
<keyword id="KW-0325">Glycoprotein</keyword>
<keyword id="KW-0378">Hydrolase</keyword>
<keyword id="KW-0458">Lysosome</keyword>
<keyword id="KW-0479">Metal-binding</keyword>
<keyword id="KW-0510">Mucopolysaccharidosis</keyword>
<keyword id="KW-0597">Phosphoprotein</keyword>
<keyword id="KW-1267">Proteomics identification</keyword>
<keyword id="KW-1185">Reference proteome</keyword>
<keyword id="KW-0732">Signal</keyword>
<sequence length="552" mass="62082">MRLLPLAPGRLRRGSPRHLPSCSPALLLLVLGGCLGVFGVAAGTRRPNVVLLLTDDQDEVLGGMTPLKKTKALIGEMGMTFSSAYVPSALCCPSRASILTGKYPHNHHVVNNTLEGNCSSKSWQKIQEPNTFPAILRSMCGYQTFFAGKYLNEYGAPDAGGLEHVPLGWSYWYALEKNSKYYNYTLSINGKARKHGENYSVDYLTDVLANVSLDFLDYKSNFEPFFMMIATPAPHSPWTAAPQYQKAFQNVFAPRNKNFNIHGTNKHWLIRQAKTPMTNSSIQFLDNAFRKRWQTLLSVDDLVEKLVKRLEFTGELNNTYIFYTSDNGYHTGQFSLPIDKRQLYEFDIKVPLLVRGPGIKPNQTSKMLVANIDLGPTILDIAGYDLNKTQMDGMSLLPILRGASNLTWRSDVLVEYQGEGRNVTDPTCPSLSPGVSQCFPDCVCEDAYNNTYACVRTMSALWNLQYCEFDDQEVFVEVYNLTADPDQITNIAKTIDPELLGKMNYRLMMLQSCSGPTCRTPGVFDPGYRFDPRLMFSNRGSVRTRRFSKHLL</sequence>
<comment type="function">
    <text evidence="6">Hydrolyzes 6-sulfate groups in N-acetyl-d-glucosaminide units of heparin sulfate and keratan sulfate.</text>
</comment>
<comment type="catalytic activity">
    <reaction evidence="6">
        <text>Hydrolysis of the 6-sulfate groups of the N-acetyl-D-glucosamine 6-sulfate units of heparan sulfate and keratan sulfate.</text>
        <dbReference type="EC" id="3.1.6.14"/>
    </reaction>
</comment>
<comment type="cofactor">
    <cofactor evidence="2">
        <name>Ca(2+)</name>
        <dbReference type="ChEBI" id="CHEBI:29108"/>
    </cofactor>
    <text evidence="2">Binds 1 Ca(2+) ion per subunit.</text>
</comment>
<comment type="biophysicochemical properties">
    <kinetics>
        <KM evidence="6">0.76 uM for alpha-N-acetylglucosamine-6-sulfate-(1-4)-L-O-(alpha-iduronic acid 2-sulfate)-(1-4)-D-O-2,5-anhydrol[1-3H]mannitol 6-sulfate</KM>
    </kinetics>
    <phDependence>
        <text evidence="6">Optimum pH is 4.8.</text>
    </phDependence>
</comment>
<comment type="interaction">
    <interactant intactId="EBI-1752200">
        <id>P15586</id>
    </interactant>
    <interactant intactId="EBI-389883">
        <id>P16333</id>
        <label>NCK1</label>
    </interactant>
    <organismsDiffer>false</organismsDiffer>
    <experiments>2</experiments>
</comment>
<comment type="subcellular location">
    <subcellularLocation>
        <location>Lysosome</location>
    </subcellularLocation>
</comment>
<comment type="alternative products">
    <event type="alternative splicing"/>
    <isoform>
        <id>P15586-1</id>
        <name>1</name>
        <sequence type="displayed"/>
    </isoform>
    <isoform>
        <id>P15586-2</id>
        <name>2</name>
        <sequence type="described" ref="VSP_056486"/>
    </isoform>
</comment>
<comment type="PTM">
    <text>The form A (78 kDa) is processed by internal peptidase cleavage to a 32 kDa N-terminal species (form B) and a 48 kDa C-terminal species.</text>
</comment>
<comment type="PTM">
    <text evidence="1">The conversion to 3-oxoalanine (also known as C-formylglycine, FGly), of a serine or cysteine residue in prokaryotes and of a cysteine residue in eukaryotes, is critical for catalytic activity.</text>
</comment>
<comment type="disease" evidence="4 8">
    <disease id="DI-00777">
        <name>Mucopolysaccharidosis 3D</name>
        <acronym>MPS3D</acronym>
        <description>A form of mucopolysaccharidosis type 3, an autosomal recessive lysosomal storage disease due to impaired degradation of heparan sulfate. MPS3 is characterized by severe central nervous system degeneration, but only mild somatic disease. Onset of clinical features usually occurs between 2 and 6 years; severe neurologic degeneration occurs in most patients between 6 and 10 years of age, and death occurs typically during the second or third decade of life.</description>
        <dbReference type="MIM" id="252940"/>
    </disease>
    <text>The disease is caused by variants affecting the gene represented in this entry.</text>
</comment>
<comment type="similarity">
    <text evidence="11">Belongs to the sulfatase family.</text>
</comment>
<feature type="signal peptide">
    <location>
        <begin position="1"/>
        <end position="36"/>
    </location>
</feature>
<feature type="chain" id="PRO_0000033413" description="N-acetylglucosamine-6-sulfatase">
    <location>
        <begin position="37"/>
        <end position="552"/>
    </location>
</feature>
<feature type="active site" description="Nucleophile" evidence="2">
    <location>
        <position position="91"/>
    </location>
</feature>
<feature type="binding site" evidence="2">
    <location>
        <position position="55"/>
    </location>
    <ligand>
        <name>Ca(2+)</name>
        <dbReference type="ChEBI" id="CHEBI:29108"/>
    </ligand>
</feature>
<feature type="binding site" evidence="2">
    <location>
        <position position="56"/>
    </location>
    <ligand>
        <name>Ca(2+)</name>
        <dbReference type="ChEBI" id="CHEBI:29108"/>
    </ligand>
</feature>
<feature type="binding site" description="via 3-oxoalanine" evidence="2">
    <location>
        <position position="91"/>
    </location>
    <ligand>
        <name>Ca(2+)</name>
        <dbReference type="ChEBI" id="CHEBI:29108"/>
    </ligand>
</feature>
<feature type="binding site" evidence="2">
    <location>
        <position position="326"/>
    </location>
    <ligand>
        <name>Ca(2+)</name>
        <dbReference type="ChEBI" id="CHEBI:29108"/>
    </ligand>
</feature>
<feature type="binding site" evidence="2">
    <location>
        <position position="327"/>
    </location>
    <ligand>
        <name>Ca(2+)</name>
        <dbReference type="ChEBI" id="CHEBI:29108"/>
    </ligand>
</feature>
<feature type="modified residue" description="3-oxoalanine (Cys)" evidence="2">
    <location>
        <position position="91"/>
    </location>
</feature>
<feature type="modified residue" description="Phosphoserine" evidence="12">
    <location>
        <position position="541"/>
    </location>
</feature>
<feature type="glycosylation site" description="N-linked (GlcNAc...) asparagine" evidence="3">
    <location>
        <position position="111"/>
    </location>
</feature>
<feature type="glycosylation site" description="N-linked (GlcNAc...) asparagine" evidence="3">
    <location>
        <position position="117"/>
    </location>
</feature>
<feature type="glycosylation site" description="N-linked (GlcNAc...) asparagine" evidence="5 7">
    <location>
        <position position="183"/>
    </location>
</feature>
<feature type="glycosylation site" description="N-linked (GlcNAc...) asparagine" evidence="3">
    <location>
        <position position="198"/>
    </location>
</feature>
<feature type="glycosylation site" description="N-linked (GlcNAc...) asparagine" evidence="3">
    <location>
        <position position="210"/>
    </location>
</feature>
<feature type="glycosylation site" description="N-linked (GlcNAc...) asparagine" evidence="5">
    <location>
        <position position="279"/>
    </location>
</feature>
<feature type="glycosylation site" description="N-linked (GlcNAc...) asparagine" evidence="7">
    <location>
        <position position="317"/>
    </location>
</feature>
<feature type="glycosylation site" description="N-linked (GlcNAc...) asparagine" evidence="3">
    <location>
        <position position="362"/>
    </location>
</feature>
<feature type="glycosylation site" description="N-linked (GlcNAc...) asparagine" evidence="7">
    <location>
        <position position="387"/>
    </location>
</feature>
<feature type="glycosylation site" description="N-linked (GlcNAc...) asparagine" evidence="3">
    <location>
        <position position="405"/>
    </location>
</feature>
<feature type="glycosylation site" description="N-linked (GlcNAc...) asparagine" evidence="6 7">
    <location>
        <position position="422"/>
    </location>
</feature>
<feature type="glycosylation site" description="N-linked (GlcNAc...) asparagine" evidence="3">
    <location>
        <position position="449"/>
    </location>
</feature>
<feature type="glycosylation site" description="N-linked (GlcNAc...) asparagine" evidence="3">
    <location>
        <position position="480"/>
    </location>
</feature>
<feature type="splice variant" id="VSP_056486" description="In isoform 2." evidence="10">
    <location>
        <begin position="65"/>
        <end position="84"/>
    </location>
</feature>
<feature type="sequence variant" id="VAR_064070" description="In MPS3D." evidence="8">
    <original>S</original>
    <variation>I</variation>
    <location>
        <position position="94"/>
    </location>
</feature>
<feature type="sequence variant" id="VAR_064071" description="In MPS3D." evidence="8">
    <location>
        <begin position="304"/>
        <end position="306"/>
    </location>
</feature>
<feature type="sequence variant" id="VAR_064072" description="In MPS3D." evidence="8">
    <original>K</original>
    <variation>R</variation>
    <location>
        <position position="340"/>
    </location>
</feature>
<feature type="sequence variant" id="VAR_064073" description="In MPS3D." evidence="8">
    <original>G</original>
    <variation>E</variation>
    <location>
        <position position="418"/>
    </location>
</feature>
<feature type="sequence conflict" description="In Ref. 3; BAD97204." evidence="11" ref="3">
    <original>F</original>
    <variation>C</variation>
    <location>
        <position position="252"/>
    </location>
</feature>
<dbReference type="EC" id="3.1.6.14" evidence="6"/>
<dbReference type="EMBL" id="Z12173">
    <property type="protein sequence ID" value="CAA78164.1"/>
    <property type="molecule type" value="mRNA"/>
</dbReference>
<dbReference type="EMBL" id="AK302443">
    <property type="protein sequence ID" value="BAG63740.1"/>
    <property type="molecule type" value="mRNA"/>
</dbReference>
<dbReference type="EMBL" id="AK223484">
    <property type="protein sequence ID" value="BAD97204.1"/>
    <property type="molecule type" value="mRNA"/>
</dbReference>
<dbReference type="EMBL" id="AC025262">
    <property type="status" value="NOT_ANNOTATED_CDS"/>
    <property type="molecule type" value="Genomic_DNA"/>
</dbReference>
<dbReference type="EMBL" id="BC012482">
    <property type="protein sequence ID" value="AAH12482.1"/>
    <property type="molecule type" value="mRNA"/>
</dbReference>
<dbReference type="CCDS" id="CCDS8970.1">
    <molecule id="P15586-1"/>
</dbReference>
<dbReference type="PIR" id="S27164">
    <property type="entry name" value="KJHUGU"/>
</dbReference>
<dbReference type="RefSeq" id="NP_002067.1">
    <molecule id="P15586-1"/>
    <property type="nucleotide sequence ID" value="NM_002076.4"/>
</dbReference>
<dbReference type="SMR" id="P15586"/>
<dbReference type="BioGRID" id="109061">
    <property type="interactions" value="124"/>
</dbReference>
<dbReference type="FunCoup" id="P15586">
    <property type="interactions" value="455"/>
</dbReference>
<dbReference type="IntAct" id="P15586">
    <property type="interactions" value="29"/>
</dbReference>
<dbReference type="MINT" id="P15586"/>
<dbReference type="STRING" id="9606.ENSP00000258145"/>
<dbReference type="GlyConnect" id="796">
    <property type="glycosylation" value="25 N-Linked glycans (8 sites)"/>
</dbReference>
<dbReference type="GlyCosmos" id="P15586">
    <property type="glycosylation" value="16 sites, 28 glycans"/>
</dbReference>
<dbReference type="GlyGen" id="P15586">
    <property type="glycosylation" value="21 sites, 115 N-linked glycans (12 sites), 2 N-linked;o-linked glycans (4 sites), 1 O-linked glycan (4 sites)"/>
</dbReference>
<dbReference type="iPTMnet" id="P15586"/>
<dbReference type="PhosphoSitePlus" id="P15586"/>
<dbReference type="SwissPalm" id="P15586"/>
<dbReference type="BioMuta" id="GNS"/>
<dbReference type="DMDM" id="232126"/>
<dbReference type="jPOST" id="P15586"/>
<dbReference type="MassIVE" id="P15586"/>
<dbReference type="PaxDb" id="9606-ENSP00000258145"/>
<dbReference type="PeptideAtlas" id="P15586"/>
<dbReference type="ProteomicsDB" id="53189">
    <molecule id="P15586-1"/>
</dbReference>
<dbReference type="ProteomicsDB" id="5526"/>
<dbReference type="Pumba" id="P15586"/>
<dbReference type="Antibodypedia" id="2462">
    <property type="antibodies" value="233 antibodies from 33 providers"/>
</dbReference>
<dbReference type="DNASU" id="2799"/>
<dbReference type="Ensembl" id="ENST00000258145.8">
    <molecule id="P15586-1"/>
    <property type="protein sequence ID" value="ENSP00000258145.3"/>
    <property type="gene ID" value="ENSG00000135677.11"/>
</dbReference>
<dbReference type="Ensembl" id="ENST00000542058.5">
    <molecule id="P15586-2"/>
    <property type="protein sequence ID" value="ENSP00000444819.1"/>
    <property type="gene ID" value="ENSG00000135677.11"/>
</dbReference>
<dbReference type="GeneID" id="2799"/>
<dbReference type="KEGG" id="hsa:2799"/>
<dbReference type="MANE-Select" id="ENST00000258145.8">
    <property type="protein sequence ID" value="ENSP00000258145.3"/>
    <property type="RefSeq nucleotide sequence ID" value="NM_002076.4"/>
    <property type="RefSeq protein sequence ID" value="NP_002067.1"/>
</dbReference>
<dbReference type="UCSC" id="uc001ssg.5">
    <molecule id="P15586-1"/>
    <property type="organism name" value="human"/>
</dbReference>
<dbReference type="AGR" id="HGNC:4422"/>
<dbReference type="CTD" id="2799"/>
<dbReference type="DisGeNET" id="2799"/>
<dbReference type="GeneCards" id="GNS"/>
<dbReference type="GeneReviews" id="GNS"/>
<dbReference type="HGNC" id="HGNC:4422">
    <property type="gene designation" value="GNS"/>
</dbReference>
<dbReference type="HPA" id="ENSG00000135677">
    <property type="expression patterns" value="Low tissue specificity"/>
</dbReference>
<dbReference type="MalaCards" id="GNS"/>
<dbReference type="MIM" id="252940">
    <property type="type" value="phenotype"/>
</dbReference>
<dbReference type="MIM" id="607664">
    <property type="type" value="gene"/>
</dbReference>
<dbReference type="neXtProt" id="NX_P15586"/>
<dbReference type="OpenTargets" id="ENSG00000135677"/>
<dbReference type="Orphanet" id="79272">
    <property type="disease" value="Sanfilippo syndrome type D"/>
</dbReference>
<dbReference type="PharmGKB" id="PA28802"/>
<dbReference type="VEuPathDB" id="HostDB:ENSG00000135677"/>
<dbReference type="eggNOG" id="KOG3731">
    <property type="taxonomic scope" value="Eukaryota"/>
</dbReference>
<dbReference type="GeneTree" id="ENSGT00940000158420"/>
<dbReference type="InParanoid" id="P15586"/>
<dbReference type="OMA" id="WCHGEHE"/>
<dbReference type="OrthoDB" id="96314at2759"/>
<dbReference type="PAN-GO" id="P15586">
    <property type="GO annotations" value="2 GO annotations based on evolutionary models"/>
</dbReference>
<dbReference type="PhylomeDB" id="P15586"/>
<dbReference type="TreeFam" id="TF313545"/>
<dbReference type="BioCyc" id="MetaCyc:HS06046-MONOMER"/>
<dbReference type="BRENDA" id="3.1.6.14">
    <property type="organism ID" value="2681"/>
</dbReference>
<dbReference type="PathwayCommons" id="P15586"/>
<dbReference type="Reactome" id="R-HSA-2022857">
    <property type="pathway name" value="Keratan sulfate degradation"/>
</dbReference>
<dbReference type="Reactome" id="R-HSA-2206305">
    <property type="pathway name" value="MPS IIID - Sanfilippo syndrome D"/>
</dbReference>
<dbReference type="Reactome" id="R-HSA-432720">
    <property type="pathway name" value="Lysosome Vesicle Biogenesis"/>
</dbReference>
<dbReference type="Reactome" id="R-HSA-6798695">
    <property type="pathway name" value="Neutrophil degranulation"/>
</dbReference>
<dbReference type="SABIO-RK" id="P15586"/>
<dbReference type="SignaLink" id="P15586"/>
<dbReference type="SIGNOR" id="P15586"/>
<dbReference type="BioGRID-ORCS" id="2799">
    <property type="hits" value="16 hits in 1157 CRISPR screens"/>
</dbReference>
<dbReference type="ChiTaRS" id="GNS">
    <property type="organism name" value="human"/>
</dbReference>
<dbReference type="GenomeRNAi" id="2799"/>
<dbReference type="Pharos" id="P15586">
    <property type="development level" value="Tbio"/>
</dbReference>
<dbReference type="PRO" id="PR:P15586"/>
<dbReference type="Proteomes" id="UP000005640">
    <property type="component" value="Chromosome 12"/>
</dbReference>
<dbReference type="RNAct" id="P15586">
    <property type="molecule type" value="protein"/>
</dbReference>
<dbReference type="Bgee" id="ENSG00000135677">
    <property type="expression patterns" value="Expressed in adrenal tissue and 205 other cell types or tissues"/>
</dbReference>
<dbReference type="ExpressionAtlas" id="P15586">
    <property type="expression patterns" value="baseline and differential"/>
</dbReference>
<dbReference type="GO" id="GO:0042582">
    <property type="term" value="C:azurophil granule"/>
    <property type="evidence" value="ECO:0000314"/>
    <property type="project" value="FlyBase"/>
</dbReference>
<dbReference type="GO" id="GO:0035578">
    <property type="term" value="C:azurophil granule lumen"/>
    <property type="evidence" value="ECO:0000304"/>
    <property type="project" value="Reactome"/>
</dbReference>
<dbReference type="GO" id="GO:0070062">
    <property type="term" value="C:extracellular exosome"/>
    <property type="evidence" value="ECO:0007005"/>
    <property type="project" value="UniProtKB"/>
</dbReference>
<dbReference type="GO" id="GO:0005576">
    <property type="term" value="C:extracellular region"/>
    <property type="evidence" value="ECO:0000304"/>
    <property type="project" value="Reactome"/>
</dbReference>
<dbReference type="GO" id="GO:1904813">
    <property type="term" value="C:ficolin-1-rich granule lumen"/>
    <property type="evidence" value="ECO:0000304"/>
    <property type="project" value="Reactome"/>
</dbReference>
<dbReference type="GO" id="GO:0043202">
    <property type="term" value="C:lysosomal lumen"/>
    <property type="evidence" value="ECO:0000304"/>
    <property type="project" value="Reactome"/>
</dbReference>
<dbReference type="GO" id="GO:0005539">
    <property type="term" value="F:glycosaminoglycan binding"/>
    <property type="evidence" value="ECO:0000318"/>
    <property type="project" value="GO_Central"/>
</dbReference>
<dbReference type="GO" id="GO:0046872">
    <property type="term" value="F:metal ion binding"/>
    <property type="evidence" value="ECO:0007669"/>
    <property type="project" value="UniProtKB-KW"/>
</dbReference>
<dbReference type="GO" id="GO:0008449">
    <property type="term" value="F:N-acetylglucosamine-6-sulfatase activity"/>
    <property type="evidence" value="ECO:0000314"/>
    <property type="project" value="FlyBase"/>
</dbReference>
<dbReference type="GO" id="GO:0043199">
    <property type="term" value="F:sulfate binding"/>
    <property type="evidence" value="ECO:0007669"/>
    <property type="project" value="Ensembl"/>
</dbReference>
<dbReference type="GO" id="GO:0008484">
    <property type="term" value="F:sulfuric ester hydrolase activity"/>
    <property type="evidence" value="ECO:0000314"/>
    <property type="project" value="MGI"/>
</dbReference>
<dbReference type="GO" id="GO:0006027">
    <property type="term" value="P:glycosaminoglycan catabolic process"/>
    <property type="evidence" value="ECO:0000304"/>
    <property type="project" value="ProtInc"/>
</dbReference>
<dbReference type="GO" id="GO:0030200">
    <property type="term" value="P:heparan sulfate proteoglycan catabolic process"/>
    <property type="evidence" value="ECO:0000314"/>
    <property type="project" value="FlyBase"/>
</dbReference>
<dbReference type="GO" id="GO:0042340">
    <property type="term" value="P:keratan sulfate proteoglycan catabolic process"/>
    <property type="evidence" value="ECO:0000304"/>
    <property type="project" value="Reactome"/>
</dbReference>
<dbReference type="CDD" id="cd16147">
    <property type="entry name" value="G6S"/>
    <property type="match status" value="1"/>
</dbReference>
<dbReference type="FunFam" id="3.40.720.10:FF:000012">
    <property type="entry name" value="N-acetylglucosamine-6-sulfatase"/>
    <property type="match status" value="1"/>
</dbReference>
<dbReference type="Gene3D" id="3.40.720.10">
    <property type="entry name" value="Alkaline Phosphatase, subunit A"/>
    <property type="match status" value="1"/>
</dbReference>
<dbReference type="InterPro" id="IPR017850">
    <property type="entry name" value="Alkaline_phosphatase_core_sf"/>
</dbReference>
<dbReference type="InterPro" id="IPR012251">
    <property type="entry name" value="GlcNAc_6-SO4ase"/>
</dbReference>
<dbReference type="InterPro" id="IPR024607">
    <property type="entry name" value="Sulfatase_CS"/>
</dbReference>
<dbReference type="InterPro" id="IPR000917">
    <property type="entry name" value="Sulfatase_N"/>
</dbReference>
<dbReference type="PANTHER" id="PTHR43108:SF5">
    <property type="entry name" value="N-ACETYLGLUCOSAMINE-6-SULFATASE"/>
    <property type="match status" value="1"/>
</dbReference>
<dbReference type="PANTHER" id="PTHR43108">
    <property type="entry name" value="N-ACETYLGLUCOSAMINE-6-SULFATASE FAMILY MEMBER"/>
    <property type="match status" value="1"/>
</dbReference>
<dbReference type="Pfam" id="PF00884">
    <property type="entry name" value="Sulfatase"/>
    <property type="match status" value="1"/>
</dbReference>
<dbReference type="PIRSF" id="PIRSF036666">
    <property type="entry name" value="G6S"/>
    <property type="match status" value="1"/>
</dbReference>
<dbReference type="SUPFAM" id="SSF53649">
    <property type="entry name" value="Alkaline phosphatase-like"/>
    <property type="match status" value="1"/>
</dbReference>
<dbReference type="PROSITE" id="PS00523">
    <property type="entry name" value="SULFATASE_1"/>
    <property type="match status" value="1"/>
</dbReference>
<dbReference type="PROSITE" id="PS00149">
    <property type="entry name" value="SULFATASE_2"/>
    <property type="match status" value="1"/>
</dbReference>
<gene>
    <name type="primary">GNS</name>
</gene>
<protein>
    <recommendedName>
        <fullName>N-acetylglucosamine-6-sulfatase</fullName>
        <ecNumber evidence="6">3.1.6.14</ecNumber>
    </recommendedName>
    <alternativeName>
        <fullName evidence="9">Glucosamine-6-sulfatase</fullName>
        <shortName evidence="9">G6S</shortName>
    </alternativeName>
</protein>